<organism>
    <name type="scientific">Campylobacter hominis (strain ATCC BAA-381 / DSM 21671 / CCUG 45161 / LMG 19568 / NCTC 13146 / CH001A)</name>
    <dbReference type="NCBI Taxonomy" id="360107"/>
    <lineage>
        <taxon>Bacteria</taxon>
        <taxon>Pseudomonadati</taxon>
        <taxon>Campylobacterota</taxon>
        <taxon>Epsilonproteobacteria</taxon>
        <taxon>Campylobacterales</taxon>
        <taxon>Campylobacteraceae</taxon>
        <taxon>Campylobacter</taxon>
    </lineage>
</organism>
<gene>
    <name evidence="1" type="primary">atpA</name>
    <name type="ordered locus">CHAB381_0685</name>
</gene>
<comment type="function">
    <text evidence="1">Produces ATP from ADP in the presence of a proton gradient across the membrane. The alpha chain is a regulatory subunit.</text>
</comment>
<comment type="catalytic activity">
    <reaction evidence="1">
        <text>ATP + H2O + 4 H(+)(in) = ADP + phosphate + 5 H(+)(out)</text>
        <dbReference type="Rhea" id="RHEA:57720"/>
        <dbReference type="ChEBI" id="CHEBI:15377"/>
        <dbReference type="ChEBI" id="CHEBI:15378"/>
        <dbReference type="ChEBI" id="CHEBI:30616"/>
        <dbReference type="ChEBI" id="CHEBI:43474"/>
        <dbReference type="ChEBI" id="CHEBI:456216"/>
        <dbReference type="EC" id="7.1.2.2"/>
    </reaction>
</comment>
<comment type="subunit">
    <text evidence="1">F-type ATPases have 2 components, CF(1) - the catalytic core - and CF(0) - the membrane proton channel. CF(1) has five subunits: alpha(3), beta(3), gamma(1), delta(1), epsilon(1). CF(0) has three main subunits: a(1), b(2) and c(9-12). The alpha and beta chains form an alternating ring which encloses part of the gamma chain. CF(1) is attached to CF(0) by a central stalk formed by the gamma and epsilon chains, while a peripheral stalk is formed by the delta and b chains.</text>
</comment>
<comment type="subcellular location">
    <subcellularLocation>
        <location evidence="1">Cell inner membrane</location>
        <topology evidence="1">Peripheral membrane protein</topology>
    </subcellularLocation>
</comment>
<comment type="similarity">
    <text evidence="1">Belongs to the ATPase alpha/beta chains family.</text>
</comment>
<evidence type="ECO:0000255" key="1">
    <source>
        <dbReference type="HAMAP-Rule" id="MF_01346"/>
    </source>
</evidence>
<sequence>MSAKIKVDEISSIIKERIENFELNINIEETGKVVNVADGVASVYGLKNVMANEMVEFENGVKGLALNLEENSVGVVILGSISGIVEGTSVKRLGKLLRVPVGDALIGRVVNALGEPIDAKGPIEYSETRFVEEKAKGIMARKSVHEPLQTGLKAIDALVPIGRGQRELIIGDRQTGKTTVAVDTIINQKGQDVICIYVAIGQKQSTVAQVVKKLEEYGAMDYTIVVSAGASEPAALQYLAPYAGCTMGEYFRDNSRHALIIYDDLSKHAVAYREMSLILRRPPGREAYPGDVFYLHSRLLERASKLSDELGAGSLTALPIIETQAGDVSAYIPTNVISITDGQIFLESGLFNSGIRPAINVGLSVSRVGGSAQIKAIKKVSGTLRLDLAQYRELQAFAQFASDLDESSRKQLDRGQRMVEILKQPPYSPLPVENQIVIIFAGSRGFLDDIPVSAIGKFENELYSFIEAKYPNIFEDIRTKKTIEKDLEENLAKALNDFKMTFSVK</sequence>
<proteinExistence type="inferred from homology"/>
<accession>A7I175</accession>
<feature type="chain" id="PRO_1000055058" description="ATP synthase subunit alpha">
    <location>
        <begin position="1"/>
        <end position="505"/>
    </location>
</feature>
<feature type="binding site" evidence="1">
    <location>
        <begin position="171"/>
        <end position="178"/>
    </location>
    <ligand>
        <name>ATP</name>
        <dbReference type="ChEBI" id="CHEBI:30616"/>
    </ligand>
</feature>
<feature type="site" description="Required for activity" evidence="1">
    <location>
        <position position="364"/>
    </location>
</feature>
<dbReference type="EC" id="7.1.2.2" evidence="1"/>
<dbReference type="EMBL" id="CP000776">
    <property type="protein sequence ID" value="ABS52242.1"/>
    <property type="molecule type" value="Genomic_DNA"/>
</dbReference>
<dbReference type="RefSeq" id="WP_012108553.1">
    <property type="nucleotide sequence ID" value="NC_009714.1"/>
</dbReference>
<dbReference type="SMR" id="A7I175"/>
<dbReference type="STRING" id="360107.CHAB381_0685"/>
<dbReference type="KEGG" id="cha:CHAB381_0685"/>
<dbReference type="eggNOG" id="COG0056">
    <property type="taxonomic scope" value="Bacteria"/>
</dbReference>
<dbReference type="HOGENOM" id="CLU_010091_2_1_7"/>
<dbReference type="OrthoDB" id="9803053at2"/>
<dbReference type="Proteomes" id="UP000002407">
    <property type="component" value="Chromosome"/>
</dbReference>
<dbReference type="GO" id="GO:0005886">
    <property type="term" value="C:plasma membrane"/>
    <property type="evidence" value="ECO:0007669"/>
    <property type="project" value="UniProtKB-SubCell"/>
</dbReference>
<dbReference type="GO" id="GO:0045259">
    <property type="term" value="C:proton-transporting ATP synthase complex"/>
    <property type="evidence" value="ECO:0007669"/>
    <property type="project" value="UniProtKB-KW"/>
</dbReference>
<dbReference type="GO" id="GO:0043531">
    <property type="term" value="F:ADP binding"/>
    <property type="evidence" value="ECO:0007669"/>
    <property type="project" value="TreeGrafter"/>
</dbReference>
<dbReference type="GO" id="GO:0005524">
    <property type="term" value="F:ATP binding"/>
    <property type="evidence" value="ECO:0007669"/>
    <property type="project" value="UniProtKB-UniRule"/>
</dbReference>
<dbReference type="GO" id="GO:0046933">
    <property type="term" value="F:proton-transporting ATP synthase activity, rotational mechanism"/>
    <property type="evidence" value="ECO:0007669"/>
    <property type="project" value="UniProtKB-UniRule"/>
</dbReference>
<dbReference type="CDD" id="cd18113">
    <property type="entry name" value="ATP-synt_F1_alpha_C"/>
    <property type="match status" value="1"/>
</dbReference>
<dbReference type="CDD" id="cd18116">
    <property type="entry name" value="ATP-synt_F1_alpha_N"/>
    <property type="match status" value="1"/>
</dbReference>
<dbReference type="CDD" id="cd01132">
    <property type="entry name" value="F1-ATPase_alpha_CD"/>
    <property type="match status" value="1"/>
</dbReference>
<dbReference type="FunFam" id="1.20.150.20:FF:000001">
    <property type="entry name" value="ATP synthase subunit alpha"/>
    <property type="match status" value="1"/>
</dbReference>
<dbReference type="FunFam" id="2.40.30.20:FF:000001">
    <property type="entry name" value="ATP synthase subunit alpha"/>
    <property type="match status" value="1"/>
</dbReference>
<dbReference type="FunFam" id="3.40.50.300:FF:000002">
    <property type="entry name" value="ATP synthase subunit alpha"/>
    <property type="match status" value="1"/>
</dbReference>
<dbReference type="Gene3D" id="2.40.30.20">
    <property type="match status" value="1"/>
</dbReference>
<dbReference type="Gene3D" id="1.20.150.20">
    <property type="entry name" value="ATP synthase alpha/beta chain, C-terminal domain"/>
    <property type="match status" value="1"/>
</dbReference>
<dbReference type="Gene3D" id="3.40.50.300">
    <property type="entry name" value="P-loop containing nucleotide triphosphate hydrolases"/>
    <property type="match status" value="1"/>
</dbReference>
<dbReference type="HAMAP" id="MF_01346">
    <property type="entry name" value="ATP_synth_alpha_bact"/>
    <property type="match status" value="1"/>
</dbReference>
<dbReference type="InterPro" id="IPR023366">
    <property type="entry name" value="ATP_synth_asu-like_sf"/>
</dbReference>
<dbReference type="InterPro" id="IPR000793">
    <property type="entry name" value="ATP_synth_asu_C"/>
</dbReference>
<dbReference type="InterPro" id="IPR038376">
    <property type="entry name" value="ATP_synth_asu_C_sf"/>
</dbReference>
<dbReference type="InterPro" id="IPR033732">
    <property type="entry name" value="ATP_synth_F1_a_nt-bd_dom"/>
</dbReference>
<dbReference type="InterPro" id="IPR005294">
    <property type="entry name" value="ATP_synth_F1_asu"/>
</dbReference>
<dbReference type="InterPro" id="IPR020003">
    <property type="entry name" value="ATPase_a/bsu_AS"/>
</dbReference>
<dbReference type="InterPro" id="IPR004100">
    <property type="entry name" value="ATPase_F1/V1/A1_a/bsu_N"/>
</dbReference>
<dbReference type="InterPro" id="IPR036121">
    <property type="entry name" value="ATPase_F1/V1/A1_a/bsu_N_sf"/>
</dbReference>
<dbReference type="InterPro" id="IPR000194">
    <property type="entry name" value="ATPase_F1/V1/A1_a/bsu_nucl-bd"/>
</dbReference>
<dbReference type="InterPro" id="IPR027417">
    <property type="entry name" value="P-loop_NTPase"/>
</dbReference>
<dbReference type="NCBIfam" id="TIGR00962">
    <property type="entry name" value="atpA"/>
    <property type="match status" value="1"/>
</dbReference>
<dbReference type="NCBIfam" id="NF009884">
    <property type="entry name" value="PRK13343.1"/>
    <property type="match status" value="1"/>
</dbReference>
<dbReference type="PANTHER" id="PTHR48082">
    <property type="entry name" value="ATP SYNTHASE SUBUNIT ALPHA, MITOCHONDRIAL"/>
    <property type="match status" value="1"/>
</dbReference>
<dbReference type="PANTHER" id="PTHR48082:SF2">
    <property type="entry name" value="ATP SYNTHASE SUBUNIT ALPHA, MITOCHONDRIAL"/>
    <property type="match status" value="1"/>
</dbReference>
<dbReference type="Pfam" id="PF00006">
    <property type="entry name" value="ATP-synt_ab"/>
    <property type="match status" value="1"/>
</dbReference>
<dbReference type="Pfam" id="PF00306">
    <property type="entry name" value="ATP-synt_ab_C"/>
    <property type="match status" value="1"/>
</dbReference>
<dbReference type="Pfam" id="PF02874">
    <property type="entry name" value="ATP-synt_ab_N"/>
    <property type="match status" value="1"/>
</dbReference>
<dbReference type="PIRSF" id="PIRSF039088">
    <property type="entry name" value="F_ATPase_subunit_alpha"/>
    <property type="match status" value="1"/>
</dbReference>
<dbReference type="SUPFAM" id="SSF47917">
    <property type="entry name" value="C-terminal domain of alpha and beta subunits of F1 ATP synthase"/>
    <property type="match status" value="1"/>
</dbReference>
<dbReference type="SUPFAM" id="SSF50615">
    <property type="entry name" value="N-terminal domain of alpha and beta subunits of F1 ATP synthase"/>
    <property type="match status" value="1"/>
</dbReference>
<dbReference type="SUPFAM" id="SSF52540">
    <property type="entry name" value="P-loop containing nucleoside triphosphate hydrolases"/>
    <property type="match status" value="1"/>
</dbReference>
<dbReference type="PROSITE" id="PS00152">
    <property type="entry name" value="ATPASE_ALPHA_BETA"/>
    <property type="match status" value="1"/>
</dbReference>
<name>ATPA_CAMHC</name>
<protein>
    <recommendedName>
        <fullName evidence="1">ATP synthase subunit alpha</fullName>
        <ecNumber evidence="1">7.1.2.2</ecNumber>
    </recommendedName>
    <alternativeName>
        <fullName evidence="1">ATP synthase F1 sector subunit alpha</fullName>
    </alternativeName>
    <alternativeName>
        <fullName evidence="1">F-ATPase subunit alpha</fullName>
    </alternativeName>
</protein>
<keyword id="KW-0066">ATP synthesis</keyword>
<keyword id="KW-0067">ATP-binding</keyword>
<keyword id="KW-0997">Cell inner membrane</keyword>
<keyword id="KW-1003">Cell membrane</keyword>
<keyword id="KW-0139">CF(1)</keyword>
<keyword id="KW-0375">Hydrogen ion transport</keyword>
<keyword id="KW-0406">Ion transport</keyword>
<keyword id="KW-0472">Membrane</keyword>
<keyword id="KW-0547">Nucleotide-binding</keyword>
<keyword id="KW-1185">Reference proteome</keyword>
<keyword id="KW-1278">Translocase</keyword>
<keyword id="KW-0813">Transport</keyword>
<reference key="1">
    <citation type="submission" date="2007-07" db="EMBL/GenBank/DDBJ databases">
        <title>Complete genome sequence of Campylobacter hominis ATCC BAA-381, a commensal isolated from the human gastrointestinal tract.</title>
        <authorList>
            <person name="Fouts D.E."/>
            <person name="Mongodin E.F."/>
            <person name="Puiu D."/>
            <person name="Sebastian Y."/>
            <person name="Miller W.G."/>
            <person name="Mandrell R.E."/>
            <person name="Nelson K.E."/>
        </authorList>
    </citation>
    <scope>NUCLEOTIDE SEQUENCE [LARGE SCALE GENOMIC DNA]</scope>
    <source>
        <strain>ATCC BAA-381 / DSM 21671 / CCUG 45161 / LMG 19568 / NCTC 13146 / CH001A</strain>
    </source>
</reference>